<evidence type="ECO:0000255" key="1"/>
<evidence type="ECO:0000255" key="2">
    <source>
        <dbReference type="PROSITE-ProRule" id="PRU00521"/>
    </source>
</evidence>
<evidence type="ECO:0000305" key="3"/>
<sequence length="312" mass="35176">MDGDNQSENSQFLLLGISESPEQQQILFWMFLSMYLVTVLGNVLIILAISSDSHLHTPMYFFLANLSFTDLFFVTNTIPKMLVNFQSQNKAISYAGCLTQLYFLVSLVTLDNLILAVMAYDRYVAICCPLHYVTAMSPGLCVLLLSLCWGLSVLYGLLLTLLLTRVTFCGPREIHYLFCDMYILLRLACSNTHIIHTVLVATGCFIFLTPLGFMTTSYVCIVRTILQIPSASKKYKAFSTCASHLGVVSLFYGTLAMVYLQPLHTYSMKDSVATVMYAVVTPMMNPFIYSLRNKDMHGALGRVLRRLFQRPK</sequence>
<protein>
    <recommendedName>
        <fullName>Olfactory receptor 1D5</fullName>
    </recommendedName>
</protein>
<name>OR1D5_PANPA</name>
<comment type="function">
    <text evidence="3">Odorant receptor.</text>
</comment>
<comment type="subcellular location">
    <subcellularLocation>
        <location>Cell membrane</location>
        <topology>Multi-pass membrane protein</topology>
    </subcellularLocation>
</comment>
<comment type="similarity">
    <text evidence="2">Belongs to the G-protein coupled receptor 1 family.</text>
</comment>
<gene>
    <name type="primary">OR1D5</name>
</gene>
<proteinExistence type="inferred from homology"/>
<feature type="chain" id="PRO_0000150423" description="Olfactory receptor 1D5">
    <location>
        <begin position="1"/>
        <end position="312"/>
    </location>
</feature>
<feature type="topological domain" description="Extracellular" evidence="1">
    <location>
        <begin position="1"/>
        <end position="25"/>
    </location>
</feature>
<feature type="transmembrane region" description="Helical; Name=1" evidence="1">
    <location>
        <begin position="26"/>
        <end position="49"/>
    </location>
</feature>
<feature type="topological domain" description="Cytoplasmic" evidence="1">
    <location>
        <begin position="50"/>
        <end position="57"/>
    </location>
</feature>
<feature type="transmembrane region" description="Helical; Name=2" evidence="1">
    <location>
        <begin position="58"/>
        <end position="79"/>
    </location>
</feature>
<feature type="topological domain" description="Extracellular" evidence="1">
    <location>
        <begin position="80"/>
        <end position="100"/>
    </location>
</feature>
<feature type="transmembrane region" description="Helical; Name=3" evidence="1">
    <location>
        <begin position="101"/>
        <end position="120"/>
    </location>
</feature>
<feature type="topological domain" description="Cytoplasmic" evidence="1">
    <location>
        <begin position="121"/>
        <end position="140"/>
    </location>
</feature>
<feature type="transmembrane region" description="Helical; Name=4" evidence="1">
    <location>
        <begin position="141"/>
        <end position="158"/>
    </location>
</feature>
<feature type="topological domain" description="Extracellular" evidence="1">
    <location>
        <begin position="159"/>
        <end position="196"/>
    </location>
</feature>
<feature type="transmembrane region" description="Helical; Name=5" evidence="1">
    <location>
        <begin position="197"/>
        <end position="220"/>
    </location>
</feature>
<feature type="topological domain" description="Cytoplasmic" evidence="1">
    <location>
        <begin position="221"/>
        <end position="237"/>
    </location>
</feature>
<feature type="transmembrane region" description="Helical; Name=6" evidence="1">
    <location>
        <begin position="238"/>
        <end position="260"/>
    </location>
</feature>
<feature type="topological domain" description="Extracellular" evidence="1">
    <location>
        <begin position="261"/>
        <end position="271"/>
    </location>
</feature>
<feature type="transmembrane region" description="Helical; Name=7" evidence="1">
    <location>
        <begin position="272"/>
        <end position="291"/>
    </location>
</feature>
<feature type="topological domain" description="Cytoplasmic" evidence="1">
    <location>
        <begin position="292"/>
        <end position="312"/>
    </location>
</feature>
<feature type="glycosylation site" description="N-linked (GlcNAc...) asparagine" evidence="1">
    <location>
        <position position="5"/>
    </location>
</feature>
<feature type="disulfide bond" evidence="2">
    <location>
        <begin position="97"/>
        <end position="189"/>
    </location>
</feature>
<reference key="1">
    <citation type="journal article" date="1999" name="Genomics">
        <title>Primate evolution of an olfactory receptor cluster: diversification by gene conversion and recent emergence of pseudogenes.</title>
        <authorList>
            <person name="Sharon D."/>
            <person name="Glusman G."/>
            <person name="Pilpel Y."/>
            <person name="Khen M."/>
            <person name="Gruetzner F."/>
            <person name="Haaf T."/>
            <person name="Lancet D."/>
        </authorList>
    </citation>
    <scope>NUCLEOTIDE SEQUENCE [GENOMIC DNA]</scope>
</reference>
<keyword id="KW-1003">Cell membrane</keyword>
<keyword id="KW-1015">Disulfide bond</keyword>
<keyword id="KW-0297">G-protein coupled receptor</keyword>
<keyword id="KW-0325">Glycoprotein</keyword>
<keyword id="KW-0472">Membrane</keyword>
<keyword id="KW-0552">Olfaction</keyword>
<keyword id="KW-0675">Receptor</keyword>
<keyword id="KW-1185">Reference proteome</keyword>
<keyword id="KW-0716">Sensory transduction</keyword>
<keyword id="KW-0807">Transducer</keyword>
<keyword id="KW-0812">Transmembrane</keyword>
<keyword id="KW-1133">Transmembrane helix</keyword>
<organism>
    <name type="scientific">Pan paniscus</name>
    <name type="common">Pygmy chimpanzee</name>
    <name type="synonym">Bonobo</name>
    <dbReference type="NCBI Taxonomy" id="9597"/>
    <lineage>
        <taxon>Eukaryota</taxon>
        <taxon>Metazoa</taxon>
        <taxon>Chordata</taxon>
        <taxon>Craniata</taxon>
        <taxon>Vertebrata</taxon>
        <taxon>Euteleostomi</taxon>
        <taxon>Mammalia</taxon>
        <taxon>Eutheria</taxon>
        <taxon>Euarchontoglires</taxon>
        <taxon>Primates</taxon>
        <taxon>Haplorrhini</taxon>
        <taxon>Catarrhini</taxon>
        <taxon>Hominidae</taxon>
        <taxon>Pan</taxon>
    </lineage>
</organism>
<accession>Q9TU95</accession>
<dbReference type="EMBL" id="AF101748">
    <property type="protein sequence ID" value="AAF03329.1"/>
    <property type="molecule type" value="Genomic_DNA"/>
</dbReference>
<dbReference type="SMR" id="Q9TU95"/>
<dbReference type="GlyCosmos" id="Q9TU95">
    <property type="glycosylation" value="1 site, No reported glycans"/>
</dbReference>
<dbReference type="eggNOG" id="ENOG502T9JB">
    <property type="taxonomic scope" value="Eukaryota"/>
</dbReference>
<dbReference type="Proteomes" id="UP000240080">
    <property type="component" value="Unplaced"/>
</dbReference>
<dbReference type="GO" id="GO:0005886">
    <property type="term" value="C:plasma membrane"/>
    <property type="evidence" value="ECO:0007669"/>
    <property type="project" value="UniProtKB-SubCell"/>
</dbReference>
<dbReference type="GO" id="GO:0004930">
    <property type="term" value="F:G protein-coupled receptor activity"/>
    <property type="evidence" value="ECO:0007669"/>
    <property type="project" value="UniProtKB-KW"/>
</dbReference>
<dbReference type="GO" id="GO:0004984">
    <property type="term" value="F:olfactory receptor activity"/>
    <property type="evidence" value="ECO:0007669"/>
    <property type="project" value="InterPro"/>
</dbReference>
<dbReference type="CDD" id="cd15918">
    <property type="entry name" value="7tmA_OR1_7-like"/>
    <property type="match status" value="1"/>
</dbReference>
<dbReference type="FunFam" id="1.10.1220.70:FF:000001">
    <property type="entry name" value="Olfactory receptor"/>
    <property type="match status" value="1"/>
</dbReference>
<dbReference type="FunFam" id="1.20.1070.10:FF:000009">
    <property type="entry name" value="Olfactory receptor"/>
    <property type="match status" value="1"/>
</dbReference>
<dbReference type="Gene3D" id="1.20.1070.10">
    <property type="entry name" value="Rhodopsin 7-helix transmembrane proteins"/>
    <property type="match status" value="1"/>
</dbReference>
<dbReference type="InterPro" id="IPR000276">
    <property type="entry name" value="GPCR_Rhodpsn"/>
</dbReference>
<dbReference type="InterPro" id="IPR017452">
    <property type="entry name" value="GPCR_Rhodpsn_7TM"/>
</dbReference>
<dbReference type="InterPro" id="IPR000725">
    <property type="entry name" value="Olfact_rcpt"/>
</dbReference>
<dbReference type="PANTHER" id="PTHR48001">
    <property type="entry name" value="OLFACTORY RECEPTOR"/>
    <property type="match status" value="1"/>
</dbReference>
<dbReference type="Pfam" id="PF13853">
    <property type="entry name" value="7tm_4"/>
    <property type="match status" value="1"/>
</dbReference>
<dbReference type="PRINTS" id="PR00237">
    <property type="entry name" value="GPCRRHODOPSN"/>
</dbReference>
<dbReference type="PRINTS" id="PR00245">
    <property type="entry name" value="OLFACTORYR"/>
</dbReference>
<dbReference type="SUPFAM" id="SSF81321">
    <property type="entry name" value="Family A G protein-coupled receptor-like"/>
    <property type="match status" value="1"/>
</dbReference>
<dbReference type="PROSITE" id="PS00237">
    <property type="entry name" value="G_PROTEIN_RECEP_F1_1"/>
    <property type="match status" value="1"/>
</dbReference>
<dbReference type="PROSITE" id="PS50262">
    <property type="entry name" value="G_PROTEIN_RECEP_F1_2"/>
    <property type="match status" value="1"/>
</dbReference>